<gene>
    <name type="primary">ATG8</name>
    <name type="ORF">Kpol_1018p100</name>
</gene>
<accession>A7TDU7</accession>
<proteinExistence type="inferred from homology"/>
<sequence>MKSSFKSEYPFEKRKTESERITEKFQNRIPVICEKAEKSDIPEIDKRKYLVPSDLTVGQFVYVIRKRIMLPPEKAIFIFVNDTLPPTAALMSAVYQEHKDKDGFLYVTYSGENTFGSL</sequence>
<comment type="function">
    <text evidence="1">Ubiquitin-like modifier involved in autophagosome formation. With ATG4, mediates the delivery of the autophagosomes to the vacuole via the microtubule cytoskeleton. Required for selective autophagic degradation of the nucleus (nucleophagy) as well as for mitophagy which contributes to regulate mitochondrial quantity and quality by eliminating the mitochondria to a basal level to fulfill cellular energy requirements and preventing excess ROS production. Participates also in membrane fusion events that take place in the early secretory pathway. Also involved in endoplasmic reticulum-specific autophagic process and is essential for the survival of cells subjected to severe ER stress. The ATG8-PE conjugate mediates tethering between adjacent membranes and stimulates membrane hemifusion, leading to expansion of the autophagosomal membrane during autophagy.</text>
</comment>
<comment type="subcellular location">
    <subcellularLocation>
        <location evidence="1">Cytoplasmic vesicle</location>
        <location evidence="1">Autophagosome membrane</location>
        <topology evidence="1">Lipid-anchor</topology>
    </subcellularLocation>
    <subcellularLocation>
        <location evidence="1">Vacuole membrane</location>
        <topology evidence="1">Lipid-anchor</topology>
    </subcellularLocation>
</comment>
<comment type="PTM">
    <text evidence="1">The C-terminal 2 residues are removed by ATG4 to expose Gly-116 at the C-terminus. The c-terminal Gly is then amidated with phosphatidylethanolamine by an activating system similar to that for ubiquitin.</text>
</comment>
<comment type="similarity">
    <text evidence="2">Belongs to the ATG8 family.</text>
</comment>
<reference key="1">
    <citation type="journal article" date="2007" name="Proc. Natl. Acad. Sci. U.S.A.">
        <title>Independent sorting-out of thousands of duplicated gene pairs in two yeast species descended from a whole-genome duplication.</title>
        <authorList>
            <person name="Scannell D.R."/>
            <person name="Frank A.C."/>
            <person name="Conant G.C."/>
            <person name="Byrne K.P."/>
            <person name="Woolfit M."/>
            <person name="Wolfe K.H."/>
        </authorList>
    </citation>
    <scope>NUCLEOTIDE SEQUENCE [LARGE SCALE GENOMIC DNA]</scope>
    <source>
        <strain>ATCC 22028 / DSM 70294 / BCRC 21397 / CBS 2163 / NBRC 10782 / NRRL Y-8283 / UCD 57-17</strain>
    </source>
</reference>
<dbReference type="EMBL" id="DS480378">
    <property type="protein sequence ID" value="EDO19567.1"/>
    <property type="molecule type" value="Genomic_DNA"/>
</dbReference>
<dbReference type="RefSeq" id="XP_001647425.1">
    <property type="nucleotide sequence ID" value="XM_001647375.1"/>
</dbReference>
<dbReference type="SMR" id="A7TDU7"/>
<dbReference type="FunCoup" id="A7TDU7">
    <property type="interactions" value="611"/>
</dbReference>
<dbReference type="STRING" id="436907.A7TDU7"/>
<dbReference type="GeneID" id="5547925"/>
<dbReference type="KEGG" id="vpo:Kpol_1018p100"/>
<dbReference type="eggNOG" id="KOG1654">
    <property type="taxonomic scope" value="Eukaryota"/>
</dbReference>
<dbReference type="HOGENOM" id="CLU_119276_0_1_1"/>
<dbReference type="InParanoid" id="A7TDU7"/>
<dbReference type="OMA" id="AVYQEHK"/>
<dbReference type="OrthoDB" id="6738456at2759"/>
<dbReference type="PhylomeDB" id="A7TDU7"/>
<dbReference type="Proteomes" id="UP000000267">
    <property type="component" value="Unassembled WGS sequence"/>
</dbReference>
<dbReference type="GO" id="GO:0000421">
    <property type="term" value="C:autophagosome membrane"/>
    <property type="evidence" value="ECO:0007669"/>
    <property type="project" value="UniProtKB-SubCell"/>
</dbReference>
<dbReference type="GO" id="GO:0031410">
    <property type="term" value="C:cytoplasmic vesicle"/>
    <property type="evidence" value="ECO:0007669"/>
    <property type="project" value="UniProtKB-KW"/>
</dbReference>
<dbReference type="GO" id="GO:0005829">
    <property type="term" value="C:cytosol"/>
    <property type="evidence" value="ECO:0007669"/>
    <property type="project" value="EnsemblFungi"/>
</dbReference>
<dbReference type="GO" id="GO:0000329">
    <property type="term" value="C:fungal-type vacuole membrane"/>
    <property type="evidence" value="ECO:0007669"/>
    <property type="project" value="EnsemblFungi"/>
</dbReference>
<dbReference type="GO" id="GO:0005811">
    <property type="term" value="C:lipid droplet"/>
    <property type="evidence" value="ECO:0007669"/>
    <property type="project" value="EnsemblFungi"/>
</dbReference>
<dbReference type="GO" id="GO:0031966">
    <property type="term" value="C:mitochondrial membrane"/>
    <property type="evidence" value="ECO:0007669"/>
    <property type="project" value="EnsemblFungi"/>
</dbReference>
<dbReference type="GO" id="GO:0000407">
    <property type="term" value="C:phagophore assembly site"/>
    <property type="evidence" value="ECO:0007669"/>
    <property type="project" value="EnsemblFungi"/>
</dbReference>
<dbReference type="GO" id="GO:0120095">
    <property type="term" value="C:vacuole-isolation membrane contact site"/>
    <property type="evidence" value="ECO:0007669"/>
    <property type="project" value="EnsemblFungi"/>
</dbReference>
<dbReference type="GO" id="GO:0008429">
    <property type="term" value="F:phosphatidylethanolamine binding"/>
    <property type="evidence" value="ECO:0007669"/>
    <property type="project" value="EnsemblFungi"/>
</dbReference>
<dbReference type="GO" id="GO:0031386">
    <property type="term" value="F:protein tag activity"/>
    <property type="evidence" value="ECO:0007669"/>
    <property type="project" value="EnsemblFungi"/>
</dbReference>
<dbReference type="GO" id="GO:0000422">
    <property type="term" value="P:autophagy of mitochondrion"/>
    <property type="evidence" value="ECO:0007669"/>
    <property type="project" value="EnsemblFungi"/>
</dbReference>
<dbReference type="GO" id="GO:0032258">
    <property type="term" value="P:cytoplasm to vacuole targeting by the Cvt pathway"/>
    <property type="evidence" value="ECO:0007669"/>
    <property type="project" value="EnsemblFungi"/>
</dbReference>
<dbReference type="GO" id="GO:0006888">
    <property type="term" value="P:endoplasmic reticulum to Golgi vesicle-mediated transport"/>
    <property type="evidence" value="ECO:0007669"/>
    <property type="project" value="EnsemblFungi"/>
</dbReference>
<dbReference type="GO" id="GO:0140042">
    <property type="term" value="P:lipid droplet formation"/>
    <property type="evidence" value="ECO:0007669"/>
    <property type="project" value="EnsemblFungi"/>
</dbReference>
<dbReference type="GO" id="GO:0061025">
    <property type="term" value="P:membrane fusion"/>
    <property type="evidence" value="ECO:0007669"/>
    <property type="project" value="EnsemblFungi"/>
</dbReference>
<dbReference type="GO" id="GO:0034727">
    <property type="term" value="P:piecemeal microautophagy of the nucleus"/>
    <property type="evidence" value="ECO:0007669"/>
    <property type="project" value="EnsemblFungi"/>
</dbReference>
<dbReference type="GO" id="GO:0034497">
    <property type="term" value="P:protein localization to phagophore assembly site"/>
    <property type="evidence" value="ECO:0007669"/>
    <property type="project" value="EnsemblFungi"/>
</dbReference>
<dbReference type="GO" id="GO:0071211">
    <property type="term" value="P:protein targeting to vacuole involved in autophagy"/>
    <property type="evidence" value="ECO:0007669"/>
    <property type="project" value="EnsemblFungi"/>
</dbReference>
<dbReference type="GO" id="GO:0031503">
    <property type="term" value="P:protein-containing complex localization"/>
    <property type="evidence" value="ECO:0007669"/>
    <property type="project" value="EnsemblFungi"/>
</dbReference>
<dbReference type="GO" id="GO:0016241">
    <property type="term" value="P:regulation of macroautophagy"/>
    <property type="evidence" value="ECO:0007669"/>
    <property type="project" value="EnsemblFungi"/>
</dbReference>
<dbReference type="GO" id="GO:1905153">
    <property type="term" value="P:regulation of membrane invagination"/>
    <property type="evidence" value="ECO:0007669"/>
    <property type="project" value="EnsemblFungi"/>
</dbReference>
<dbReference type="GO" id="GO:0061709">
    <property type="term" value="P:reticulophagy"/>
    <property type="evidence" value="ECO:0007669"/>
    <property type="project" value="EnsemblFungi"/>
</dbReference>
<dbReference type="CDD" id="cd16128">
    <property type="entry name" value="Ubl_ATG8"/>
    <property type="match status" value="1"/>
</dbReference>
<dbReference type="FunFam" id="3.10.20.90:FF:000010">
    <property type="entry name" value="Autophagy-related protein"/>
    <property type="match status" value="1"/>
</dbReference>
<dbReference type="Gene3D" id="3.10.20.90">
    <property type="entry name" value="Phosphatidylinositol 3-kinase Catalytic Subunit, Chain A, domain 1"/>
    <property type="match status" value="1"/>
</dbReference>
<dbReference type="InterPro" id="IPR004241">
    <property type="entry name" value="Atg8-like"/>
</dbReference>
<dbReference type="InterPro" id="IPR029071">
    <property type="entry name" value="Ubiquitin-like_domsf"/>
</dbReference>
<dbReference type="PANTHER" id="PTHR10969">
    <property type="entry name" value="MICROTUBULE-ASSOCIATED PROTEINS 1A/1B LIGHT CHAIN 3-RELATED"/>
    <property type="match status" value="1"/>
</dbReference>
<dbReference type="Pfam" id="PF02991">
    <property type="entry name" value="ATG8"/>
    <property type="match status" value="1"/>
</dbReference>
<dbReference type="SUPFAM" id="SSF54236">
    <property type="entry name" value="Ubiquitin-like"/>
    <property type="match status" value="1"/>
</dbReference>
<name>ATG8_VANPO</name>
<organism>
    <name type="scientific">Vanderwaltozyma polyspora (strain ATCC 22028 / DSM 70294 / BCRC 21397 / CBS 2163 / NBRC 10782 / NRRL Y-8283 / UCD 57-17)</name>
    <name type="common">Kluyveromyces polysporus</name>
    <dbReference type="NCBI Taxonomy" id="436907"/>
    <lineage>
        <taxon>Eukaryota</taxon>
        <taxon>Fungi</taxon>
        <taxon>Dikarya</taxon>
        <taxon>Ascomycota</taxon>
        <taxon>Saccharomycotina</taxon>
        <taxon>Saccharomycetes</taxon>
        <taxon>Saccharomycetales</taxon>
        <taxon>Saccharomycetaceae</taxon>
        <taxon>Vanderwaltozyma</taxon>
    </lineage>
</organism>
<feature type="chain" id="PRO_0000317902" description="Autophagy-related protein 8">
    <location>
        <begin position="1"/>
        <end position="116"/>
    </location>
</feature>
<feature type="propeptide" id="PRO_0000317903" description="Removed in mature form" evidence="1">
    <location>
        <begin position="117"/>
        <end position="118"/>
    </location>
</feature>
<feature type="site" description="Cleavage; by ATG4" evidence="1">
    <location>
        <begin position="116"/>
        <end position="117"/>
    </location>
</feature>
<feature type="lipid moiety-binding region" description="Phosphatidylethanolamine amidated glycine" evidence="1">
    <location>
        <position position="116"/>
    </location>
</feature>
<keyword id="KW-0072">Autophagy</keyword>
<keyword id="KW-0968">Cytoplasmic vesicle</keyword>
<keyword id="KW-0449">Lipoprotein</keyword>
<keyword id="KW-0472">Membrane</keyword>
<keyword id="KW-0653">Protein transport</keyword>
<keyword id="KW-1185">Reference proteome</keyword>
<keyword id="KW-0813">Transport</keyword>
<keyword id="KW-0833">Ubl conjugation pathway</keyword>
<keyword id="KW-0926">Vacuole</keyword>
<evidence type="ECO:0000250" key="1">
    <source>
        <dbReference type="UniProtKB" id="P38182"/>
    </source>
</evidence>
<evidence type="ECO:0000305" key="2"/>
<protein>
    <recommendedName>
        <fullName>Autophagy-related protein 8</fullName>
    </recommendedName>
    <alternativeName>
        <fullName>Autophagy-related ubiquitin-like modifier ATG8</fullName>
    </alternativeName>
</protein>